<reference key="1">
    <citation type="journal article" date="2009" name="J. Bacteriol.">
        <title>Complete genome sequence of Rhodobacter sphaeroides KD131.</title>
        <authorList>
            <person name="Lim S.-K."/>
            <person name="Kim S.J."/>
            <person name="Cha S.H."/>
            <person name="Oh Y.-K."/>
            <person name="Rhee H.-J."/>
            <person name="Kim M.-S."/>
            <person name="Lee J.K."/>
        </authorList>
    </citation>
    <scope>NUCLEOTIDE SEQUENCE [LARGE SCALE GENOMIC DNA]</scope>
    <source>
        <strain>KD131 / KCTC 12085</strain>
    </source>
</reference>
<sequence>MAFKPLHDRVLVRRVQSDEKTKGGLIIPDTAKEKPAEGEVVSCGEGARKDSGELIAMSVKAGDRVLFGKWSGTEVTIDGAELLIMKESDILGILS</sequence>
<organism>
    <name type="scientific">Cereibacter sphaeroides (strain KD131 / KCTC 12085)</name>
    <name type="common">Rhodobacter sphaeroides</name>
    <dbReference type="NCBI Taxonomy" id="557760"/>
    <lineage>
        <taxon>Bacteria</taxon>
        <taxon>Pseudomonadati</taxon>
        <taxon>Pseudomonadota</taxon>
        <taxon>Alphaproteobacteria</taxon>
        <taxon>Rhodobacterales</taxon>
        <taxon>Paracoccaceae</taxon>
        <taxon>Cereibacter</taxon>
    </lineage>
</organism>
<name>CH10_CERSK</name>
<keyword id="KW-0143">Chaperone</keyword>
<keyword id="KW-0963">Cytoplasm</keyword>
<accession>B9KPJ9</accession>
<feature type="chain" id="PRO_1000146914" description="Co-chaperonin GroES">
    <location>
        <begin position="1"/>
        <end position="95"/>
    </location>
</feature>
<evidence type="ECO:0000255" key="1">
    <source>
        <dbReference type="HAMAP-Rule" id="MF_00580"/>
    </source>
</evidence>
<proteinExistence type="inferred from homology"/>
<comment type="function">
    <text evidence="1">Together with the chaperonin GroEL, plays an essential role in assisting protein folding. The GroEL-GroES system forms a nano-cage that allows encapsulation of the non-native substrate proteins and provides a physical environment optimized to promote and accelerate protein folding. GroES binds to the apical surface of the GroEL ring, thereby capping the opening of the GroEL channel.</text>
</comment>
<comment type="subunit">
    <text evidence="1">Heptamer of 7 subunits arranged in a ring. Interacts with the chaperonin GroEL.</text>
</comment>
<comment type="subcellular location">
    <subcellularLocation>
        <location evidence="1">Cytoplasm</location>
    </subcellularLocation>
</comment>
<comment type="similarity">
    <text evidence="1">Belongs to the GroES chaperonin family.</text>
</comment>
<dbReference type="EMBL" id="CP001150">
    <property type="protein sequence ID" value="ACM00492.1"/>
    <property type="molecule type" value="Genomic_DNA"/>
</dbReference>
<dbReference type="RefSeq" id="WP_002719473.1">
    <property type="nucleotide sequence ID" value="NC_011963.1"/>
</dbReference>
<dbReference type="SMR" id="B9KPJ9"/>
<dbReference type="GeneID" id="67446080"/>
<dbReference type="KEGG" id="rsk:RSKD131_0632"/>
<dbReference type="HOGENOM" id="CLU_132825_1_0_5"/>
<dbReference type="GO" id="GO:0005737">
    <property type="term" value="C:cytoplasm"/>
    <property type="evidence" value="ECO:0007669"/>
    <property type="project" value="UniProtKB-SubCell"/>
</dbReference>
<dbReference type="GO" id="GO:0005524">
    <property type="term" value="F:ATP binding"/>
    <property type="evidence" value="ECO:0007669"/>
    <property type="project" value="InterPro"/>
</dbReference>
<dbReference type="GO" id="GO:0046872">
    <property type="term" value="F:metal ion binding"/>
    <property type="evidence" value="ECO:0007669"/>
    <property type="project" value="TreeGrafter"/>
</dbReference>
<dbReference type="GO" id="GO:0044183">
    <property type="term" value="F:protein folding chaperone"/>
    <property type="evidence" value="ECO:0007669"/>
    <property type="project" value="InterPro"/>
</dbReference>
<dbReference type="GO" id="GO:0051087">
    <property type="term" value="F:protein-folding chaperone binding"/>
    <property type="evidence" value="ECO:0007669"/>
    <property type="project" value="TreeGrafter"/>
</dbReference>
<dbReference type="GO" id="GO:0051082">
    <property type="term" value="F:unfolded protein binding"/>
    <property type="evidence" value="ECO:0007669"/>
    <property type="project" value="TreeGrafter"/>
</dbReference>
<dbReference type="GO" id="GO:0051085">
    <property type="term" value="P:chaperone cofactor-dependent protein refolding"/>
    <property type="evidence" value="ECO:0007669"/>
    <property type="project" value="TreeGrafter"/>
</dbReference>
<dbReference type="CDD" id="cd00320">
    <property type="entry name" value="cpn10"/>
    <property type="match status" value="1"/>
</dbReference>
<dbReference type="FunFam" id="2.30.33.40:FF:000001">
    <property type="entry name" value="10 kDa chaperonin"/>
    <property type="match status" value="1"/>
</dbReference>
<dbReference type="Gene3D" id="2.30.33.40">
    <property type="entry name" value="GroES chaperonin"/>
    <property type="match status" value="1"/>
</dbReference>
<dbReference type="HAMAP" id="MF_00580">
    <property type="entry name" value="CH10"/>
    <property type="match status" value="1"/>
</dbReference>
<dbReference type="InterPro" id="IPR020818">
    <property type="entry name" value="Chaperonin_GroES"/>
</dbReference>
<dbReference type="InterPro" id="IPR037124">
    <property type="entry name" value="Chaperonin_GroES_sf"/>
</dbReference>
<dbReference type="InterPro" id="IPR018369">
    <property type="entry name" value="Chaprnonin_Cpn10_CS"/>
</dbReference>
<dbReference type="InterPro" id="IPR011032">
    <property type="entry name" value="GroES-like_sf"/>
</dbReference>
<dbReference type="NCBIfam" id="NF001527">
    <property type="entry name" value="PRK00364.1-2"/>
    <property type="match status" value="1"/>
</dbReference>
<dbReference type="NCBIfam" id="NF001529">
    <property type="entry name" value="PRK00364.1-5"/>
    <property type="match status" value="1"/>
</dbReference>
<dbReference type="NCBIfam" id="NF001531">
    <property type="entry name" value="PRK00364.2-2"/>
    <property type="match status" value="1"/>
</dbReference>
<dbReference type="NCBIfam" id="NF001533">
    <property type="entry name" value="PRK00364.2-4"/>
    <property type="match status" value="1"/>
</dbReference>
<dbReference type="PANTHER" id="PTHR10772">
    <property type="entry name" value="10 KDA HEAT SHOCK PROTEIN"/>
    <property type="match status" value="1"/>
</dbReference>
<dbReference type="PANTHER" id="PTHR10772:SF58">
    <property type="entry name" value="CO-CHAPERONIN GROES"/>
    <property type="match status" value="1"/>
</dbReference>
<dbReference type="Pfam" id="PF00166">
    <property type="entry name" value="Cpn10"/>
    <property type="match status" value="1"/>
</dbReference>
<dbReference type="PRINTS" id="PR00297">
    <property type="entry name" value="CHAPERONIN10"/>
</dbReference>
<dbReference type="SMART" id="SM00883">
    <property type="entry name" value="Cpn10"/>
    <property type="match status" value="1"/>
</dbReference>
<dbReference type="SUPFAM" id="SSF50129">
    <property type="entry name" value="GroES-like"/>
    <property type="match status" value="1"/>
</dbReference>
<dbReference type="PROSITE" id="PS00681">
    <property type="entry name" value="CHAPERONINS_CPN10"/>
    <property type="match status" value="1"/>
</dbReference>
<gene>
    <name evidence="1" type="primary">groES</name>
    <name evidence="1" type="synonym">groS</name>
    <name type="ordered locus">RSKD131_0632</name>
</gene>
<protein>
    <recommendedName>
        <fullName evidence="1">Co-chaperonin GroES</fullName>
    </recommendedName>
    <alternativeName>
        <fullName evidence="1">10 kDa chaperonin</fullName>
    </alternativeName>
    <alternativeName>
        <fullName evidence="1">Chaperonin-10</fullName>
        <shortName evidence="1">Cpn10</shortName>
    </alternativeName>
</protein>